<comment type="function">
    <text evidence="1">Catalyzes an oxidative deamination of predominantly hydrophobic and aromatic L-amino acids, thus producing hydrogen peroxide that may contribute to the diverse toxic effects of this enzyme. Exhibits diverse biological activities, such as hemorrhage, hemolysis, edema, apoptosis of vascular endothelial cells or tumor cell lines, antibacterial and antiparasitic activities, as well as regulation of platelet aggregation. Its effect on platelets is controversial, since it either induces aggregation or inhibits agonist-induced aggregation. These different effects are probably due to different experimental conditions.</text>
</comment>
<comment type="catalytic activity">
    <reaction evidence="2">
        <text>an L-alpha-amino acid + O2 + H2O = a 2-oxocarboxylate + H2O2 + NH4(+)</text>
        <dbReference type="Rhea" id="RHEA:13781"/>
        <dbReference type="ChEBI" id="CHEBI:15377"/>
        <dbReference type="ChEBI" id="CHEBI:15379"/>
        <dbReference type="ChEBI" id="CHEBI:16240"/>
        <dbReference type="ChEBI" id="CHEBI:28938"/>
        <dbReference type="ChEBI" id="CHEBI:35179"/>
        <dbReference type="ChEBI" id="CHEBI:59869"/>
        <dbReference type="EC" id="1.4.3.2"/>
    </reaction>
</comment>
<comment type="cofactor">
    <cofactor evidence="2">
        <name>FAD</name>
        <dbReference type="ChEBI" id="CHEBI:57692"/>
    </cofactor>
</comment>
<comment type="subunit">
    <text evidence="2">Homodimer; non-covalently linked.</text>
</comment>
<comment type="subcellular location">
    <subcellularLocation>
        <location evidence="4">Secreted</location>
    </subcellularLocation>
</comment>
<comment type="tissue specificity">
    <text evidence="7">Expressed by the venom gland.</text>
</comment>
<comment type="similarity">
    <text evidence="6">Belongs to the flavin monoamine oxidase family. FIG1 subfamily.</text>
</comment>
<reference key="1">
    <citation type="journal article" date="2009" name="J. Proteomics">
        <title>Combined snake venomics and venom gland transcriptomic analysis of the ocellated carpet viper, Echis ocellatus.</title>
        <authorList>
            <person name="Wagstaff S.C."/>
            <person name="Sanz L."/>
            <person name="Juarez P."/>
            <person name="Harrison R.A."/>
            <person name="Calvete J.J."/>
        </authorList>
    </citation>
    <scope>NUCLEOTIDE SEQUENCE [MRNA]</scope>
    <scope>IDENTIFICATION BY MASS SPECTROMETRY</scope>
    <scope>SUBCELLULAR LOCATION</scope>
    <source>
        <tissue>Venom</tissue>
        <tissue>Venom gland</tissue>
    </source>
</reference>
<organism>
    <name type="scientific">Echis ocellatus</name>
    <name type="common">Ocellated saw-scaled viper</name>
    <dbReference type="NCBI Taxonomy" id="99586"/>
    <lineage>
        <taxon>Eukaryota</taxon>
        <taxon>Metazoa</taxon>
        <taxon>Chordata</taxon>
        <taxon>Craniata</taxon>
        <taxon>Vertebrata</taxon>
        <taxon>Euteleostomi</taxon>
        <taxon>Lepidosauria</taxon>
        <taxon>Squamata</taxon>
        <taxon>Bifurcata</taxon>
        <taxon>Unidentata</taxon>
        <taxon>Episquamata</taxon>
        <taxon>Toxicofera</taxon>
        <taxon>Serpentes</taxon>
        <taxon>Colubroidea</taxon>
        <taxon>Viperidae</taxon>
        <taxon>Viperinae</taxon>
        <taxon>Echis</taxon>
    </lineage>
</organism>
<protein>
    <recommendedName>
        <fullName>L-amino-acid oxidase</fullName>
        <shortName>LAAO</shortName>
        <shortName evidence="5">LAO</shortName>
        <ecNumber evidence="2">1.4.3.2</ecNumber>
    </recommendedName>
</protein>
<evidence type="ECO:0000250" key="1">
    <source>
        <dbReference type="UniProtKB" id="P0CC17"/>
    </source>
</evidence>
<evidence type="ECO:0000250" key="2">
    <source>
        <dbReference type="UniProtKB" id="P81382"/>
    </source>
</evidence>
<evidence type="ECO:0000255" key="3"/>
<evidence type="ECO:0000269" key="4">
    <source>
    </source>
</evidence>
<evidence type="ECO:0000303" key="5">
    <source>
    </source>
</evidence>
<evidence type="ECO:0000305" key="6"/>
<evidence type="ECO:0000305" key="7">
    <source>
    </source>
</evidence>
<feature type="signal peptide" evidence="3">
    <location>
        <begin position="1"/>
        <end position="18"/>
    </location>
</feature>
<feature type="chain" id="PRO_0000412602" description="L-amino-acid oxidase">
    <location>
        <begin position="19"/>
        <end position="504"/>
    </location>
</feature>
<feature type="binding site" evidence="2">
    <location>
        <begin position="61"/>
        <end position="62"/>
    </location>
    <ligand>
        <name>FAD</name>
        <dbReference type="ChEBI" id="CHEBI:57692"/>
    </ligand>
</feature>
<feature type="binding site" evidence="2">
    <location>
        <begin position="81"/>
        <end position="82"/>
    </location>
    <ligand>
        <name>FAD</name>
        <dbReference type="ChEBI" id="CHEBI:57692"/>
    </ligand>
</feature>
<feature type="binding site" evidence="2">
    <location>
        <position position="89"/>
    </location>
    <ligand>
        <name>FAD</name>
        <dbReference type="ChEBI" id="CHEBI:57692"/>
    </ligand>
</feature>
<feature type="binding site" evidence="2">
    <location>
        <begin position="105"/>
        <end position="108"/>
    </location>
    <ligand>
        <name>FAD</name>
        <dbReference type="ChEBI" id="CHEBI:57692"/>
    </ligand>
</feature>
<feature type="binding site" evidence="2">
    <location>
        <position position="108"/>
    </location>
    <ligand>
        <name>substrate</name>
    </ligand>
</feature>
<feature type="binding site" evidence="2">
    <location>
        <position position="241"/>
    </location>
    <ligand>
        <name>substrate</name>
    </ligand>
</feature>
<feature type="binding site" evidence="2">
    <location>
        <position position="279"/>
    </location>
    <ligand>
        <name>FAD</name>
        <dbReference type="ChEBI" id="CHEBI:57692"/>
    </ligand>
</feature>
<feature type="binding site" evidence="2">
    <location>
        <position position="390"/>
    </location>
    <ligand>
        <name>substrate</name>
    </ligand>
</feature>
<feature type="binding site" evidence="2">
    <location>
        <position position="475"/>
    </location>
    <ligand>
        <name>FAD</name>
        <dbReference type="ChEBI" id="CHEBI:57692"/>
    </ligand>
</feature>
<feature type="binding site" evidence="2">
    <location>
        <begin position="482"/>
        <end position="487"/>
    </location>
    <ligand>
        <name>FAD</name>
        <dbReference type="ChEBI" id="CHEBI:57692"/>
    </ligand>
</feature>
<feature type="binding site" evidence="2">
    <location>
        <begin position="482"/>
        <end position="483"/>
    </location>
    <ligand>
        <name>substrate</name>
    </ligand>
</feature>
<feature type="glycosylation site" description="N-linked (GlcNAc...) asparagine" evidence="3">
    <location>
        <position position="190"/>
    </location>
</feature>
<feature type="glycosylation site" description="N-linked (GlcNAc...) asparagine" evidence="3">
    <location>
        <position position="379"/>
    </location>
</feature>
<feature type="disulfide bond" evidence="2">
    <location>
        <begin position="28"/>
        <end position="191"/>
    </location>
</feature>
<feature type="disulfide bond" evidence="2">
    <location>
        <begin position="349"/>
        <end position="430"/>
    </location>
</feature>
<name>OXLA_ECHOC</name>
<accession>B5U6Y8</accession>
<sequence>MNIFFMFSLLFLATLGSCADDKNPLEECFREADYEEFLEIAKNGLKKTSNPKDIVVVGAGMSGLSAAYVLAGAGHKVTVLEASQLVGGRVRTHRNAKEGWYANLGPMRIPEKHRIVREYIRKFGLELNEFVQETDNGWYFVKNIRKRVGEVKKDPGLLKYPVKPSEAGKSAGQLYQEALGKAVEELKRTNCSYMLNKYDTYSTKEYLIKEGNLSTGAVDMIGDLMNEDSGYYVSFVESMKHDDIFAYEKRFDEIVGGMDQLPTSMYRAIEKSVLFKARVTKIQQNAEKVRVTYQTAAKTLSDVTADYVIVCTTSRAARRINFKPPLPPKKAHALRSVHYRSATKIFLTCTKKFWEDDGIQGGKSTTDLPSRFIYYPNHNFTSGVGVIIAYGIGDDSNFFLSLTLNECADIVFSDLSSIHQLPKNDIQKFCNPSVIQKWSLDRYAMGAITTFTPYQFQDYSKALTAPAGRVYFAGEYTANAHGWIDSTIKSGLTAARDVNQASEL</sequence>
<keyword id="KW-0044">Antibiotic</keyword>
<keyword id="KW-0929">Antimicrobial</keyword>
<keyword id="KW-0053">Apoptosis</keyword>
<keyword id="KW-0204">Cytolysis</keyword>
<keyword id="KW-1015">Disulfide bond</keyword>
<keyword id="KW-0274">FAD</keyword>
<keyword id="KW-0285">Flavoprotein</keyword>
<keyword id="KW-0325">Glycoprotein</keyword>
<keyword id="KW-0354">Hemolysis</keyword>
<keyword id="KW-1199">Hemostasis impairing toxin</keyword>
<keyword id="KW-0560">Oxidoreductase</keyword>
<keyword id="KW-0964">Secreted</keyword>
<keyword id="KW-0732">Signal</keyword>
<keyword id="KW-0800">Toxin</keyword>
<dbReference type="EC" id="1.4.3.2" evidence="2"/>
<dbReference type="EMBL" id="FM177950">
    <property type="protein sequence ID" value="CAQ72894.1"/>
    <property type="molecule type" value="mRNA"/>
</dbReference>
<dbReference type="SMR" id="B5U6Y8"/>
<dbReference type="GO" id="GO:0005576">
    <property type="term" value="C:extracellular region"/>
    <property type="evidence" value="ECO:0007669"/>
    <property type="project" value="UniProtKB-SubCell"/>
</dbReference>
<dbReference type="GO" id="GO:0001716">
    <property type="term" value="F:L-amino-acid oxidase activity"/>
    <property type="evidence" value="ECO:0007669"/>
    <property type="project" value="UniProtKB-EC"/>
</dbReference>
<dbReference type="GO" id="GO:0090729">
    <property type="term" value="F:toxin activity"/>
    <property type="evidence" value="ECO:0007669"/>
    <property type="project" value="UniProtKB-KW"/>
</dbReference>
<dbReference type="GO" id="GO:0009063">
    <property type="term" value="P:amino acid catabolic process"/>
    <property type="evidence" value="ECO:0007669"/>
    <property type="project" value="TreeGrafter"/>
</dbReference>
<dbReference type="GO" id="GO:0006915">
    <property type="term" value="P:apoptotic process"/>
    <property type="evidence" value="ECO:0007669"/>
    <property type="project" value="UniProtKB-KW"/>
</dbReference>
<dbReference type="GO" id="GO:0042742">
    <property type="term" value="P:defense response to bacterium"/>
    <property type="evidence" value="ECO:0007669"/>
    <property type="project" value="UniProtKB-KW"/>
</dbReference>
<dbReference type="GO" id="GO:0031640">
    <property type="term" value="P:killing of cells of another organism"/>
    <property type="evidence" value="ECO:0007669"/>
    <property type="project" value="UniProtKB-KW"/>
</dbReference>
<dbReference type="FunFam" id="1.10.405.10:FF:000004">
    <property type="entry name" value="Amine oxidase"/>
    <property type="match status" value="1"/>
</dbReference>
<dbReference type="FunFam" id="3.50.50.60:FF:000450">
    <property type="entry name" value="Amine oxidase"/>
    <property type="match status" value="1"/>
</dbReference>
<dbReference type="FunFam" id="3.50.50.60:FF:001010">
    <property type="entry name" value="L-amino-acid oxidase"/>
    <property type="match status" value="1"/>
</dbReference>
<dbReference type="Gene3D" id="3.90.660.10">
    <property type="match status" value="1"/>
</dbReference>
<dbReference type="Gene3D" id="3.50.50.60">
    <property type="entry name" value="FAD/NAD(P)-binding domain"/>
    <property type="match status" value="1"/>
</dbReference>
<dbReference type="Gene3D" id="1.10.405.10">
    <property type="entry name" value="Guanine Nucleotide Dissociation Inhibitor, domain 1"/>
    <property type="match status" value="1"/>
</dbReference>
<dbReference type="InterPro" id="IPR002937">
    <property type="entry name" value="Amino_oxidase"/>
</dbReference>
<dbReference type="InterPro" id="IPR036188">
    <property type="entry name" value="FAD/NAD-bd_sf"/>
</dbReference>
<dbReference type="InterPro" id="IPR050281">
    <property type="entry name" value="Flavin_monoamine_oxidase"/>
</dbReference>
<dbReference type="PANTHER" id="PTHR10742:SF355">
    <property type="entry name" value="AMINE OXIDASE"/>
    <property type="match status" value="1"/>
</dbReference>
<dbReference type="PANTHER" id="PTHR10742">
    <property type="entry name" value="FLAVIN MONOAMINE OXIDASE"/>
    <property type="match status" value="1"/>
</dbReference>
<dbReference type="Pfam" id="PF01593">
    <property type="entry name" value="Amino_oxidase"/>
    <property type="match status" value="1"/>
</dbReference>
<dbReference type="SUPFAM" id="SSF54373">
    <property type="entry name" value="FAD-linked reductases, C-terminal domain"/>
    <property type="match status" value="1"/>
</dbReference>
<dbReference type="SUPFAM" id="SSF51905">
    <property type="entry name" value="FAD/NAD(P)-binding domain"/>
    <property type="match status" value="1"/>
</dbReference>
<proteinExistence type="evidence at protein level"/>